<evidence type="ECO:0000255" key="1">
    <source>
        <dbReference type="HAMAP-Rule" id="MF_00761"/>
    </source>
</evidence>
<protein>
    <recommendedName>
        <fullName evidence="1">UPF0303 protein Spro_1996</fullName>
    </recommendedName>
</protein>
<proteinExistence type="inferred from homology"/>
<reference key="1">
    <citation type="submission" date="2007-09" db="EMBL/GenBank/DDBJ databases">
        <title>Complete sequence of chromosome of Serratia proteamaculans 568.</title>
        <authorList>
            <consortium name="US DOE Joint Genome Institute"/>
            <person name="Copeland A."/>
            <person name="Lucas S."/>
            <person name="Lapidus A."/>
            <person name="Barry K."/>
            <person name="Glavina del Rio T."/>
            <person name="Dalin E."/>
            <person name="Tice H."/>
            <person name="Pitluck S."/>
            <person name="Chain P."/>
            <person name="Malfatti S."/>
            <person name="Shin M."/>
            <person name="Vergez L."/>
            <person name="Schmutz J."/>
            <person name="Larimer F."/>
            <person name="Land M."/>
            <person name="Hauser L."/>
            <person name="Kyrpides N."/>
            <person name="Kim E."/>
            <person name="Taghavi S."/>
            <person name="Newman L."/>
            <person name="Vangronsveld J."/>
            <person name="van der Lelie D."/>
            <person name="Richardson P."/>
        </authorList>
    </citation>
    <scope>NUCLEOTIDE SEQUENCE [LARGE SCALE GENOMIC DNA]</scope>
    <source>
        <strain>568</strain>
    </source>
</reference>
<name>Y1996_SERP5</name>
<dbReference type="EMBL" id="CP000826">
    <property type="protein sequence ID" value="ABV41099.1"/>
    <property type="molecule type" value="Genomic_DNA"/>
</dbReference>
<dbReference type="SMR" id="A8GDA9"/>
<dbReference type="STRING" id="399741.Spro_1996"/>
<dbReference type="KEGG" id="spe:Spro_1996"/>
<dbReference type="eggNOG" id="COG4702">
    <property type="taxonomic scope" value="Bacteria"/>
</dbReference>
<dbReference type="HOGENOM" id="CLU_101036_2_1_6"/>
<dbReference type="OrthoDB" id="9815315at2"/>
<dbReference type="Gene3D" id="3.30.450.150">
    <property type="entry name" value="Haem-degrading domain"/>
    <property type="match status" value="1"/>
</dbReference>
<dbReference type="HAMAP" id="MF_00761">
    <property type="entry name" value="UPF0303"/>
    <property type="match status" value="1"/>
</dbReference>
<dbReference type="InterPro" id="IPR005624">
    <property type="entry name" value="PduO/GlcC-like"/>
</dbReference>
<dbReference type="InterPro" id="IPR038084">
    <property type="entry name" value="PduO/GlcC-like_sf"/>
</dbReference>
<dbReference type="InterPro" id="IPR010371">
    <property type="entry name" value="YBR137W-like"/>
</dbReference>
<dbReference type="NCBIfam" id="NF002696">
    <property type="entry name" value="PRK02487.1-5"/>
    <property type="match status" value="1"/>
</dbReference>
<dbReference type="PANTHER" id="PTHR28255">
    <property type="match status" value="1"/>
</dbReference>
<dbReference type="PANTHER" id="PTHR28255:SF1">
    <property type="entry name" value="UPF0303 PROTEIN YBR137W"/>
    <property type="match status" value="1"/>
</dbReference>
<dbReference type="Pfam" id="PF03928">
    <property type="entry name" value="HbpS-like"/>
    <property type="match status" value="1"/>
</dbReference>
<dbReference type="PIRSF" id="PIRSF008757">
    <property type="entry name" value="UCP008757"/>
    <property type="match status" value="1"/>
</dbReference>
<dbReference type="SUPFAM" id="SSF143744">
    <property type="entry name" value="GlcG-like"/>
    <property type="match status" value="1"/>
</dbReference>
<accession>A8GDA9</accession>
<organism>
    <name type="scientific">Serratia proteamaculans (strain 568)</name>
    <dbReference type="NCBI Taxonomy" id="399741"/>
    <lineage>
        <taxon>Bacteria</taxon>
        <taxon>Pseudomonadati</taxon>
        <taxon>Pseudomonadota</taxon>
        <taxon>Gammaproteobacteria</taxon>
        <taxon>Enterobacterales</taxon>
        <taxon>Yersiniaceae</taxon>
        <taxon>Serratia</taxon>
    </lineage>
</organism>
<sequence length="161" mass="17744">MNIDDDLQALTKQEATLTFSHFDHNTAWELGSALRSAAERARLSIAIEIQLAGQTLFYYAMPGTTPDIADWVRRKRNVVNHFHKSSYAIGLRLQQRQSTLEERYGLSVRDYSAHGGAFPINLAGLGCIGTISISGSPQLEDHNLLVSTLAHFLGLSLPAVH</sequence>
<comment type="similarity">
    <text evidence="1">Belongs to the UPF0303 family.</text>
</comment>
<gene>
    <name type="ordered locus">Spro_1996</name>
</gene>
<feature type="chain" id="PRO_1000062208" description="UPF0303 protein Spro_1996">
    <location>
        <begin position="1"/>
        <end position="161"/>
    </location>
</feature>